<feature type="chain" id="PRO_0000108958" description="UDP-N-acetylmuramoylalanine--D-glutamate ligase">
    <location>
        <begin position="1"/>
        <end position="466"/>
    </location>
</feature>
<feature type="binding site" evidence="1">
    <location>
        <begin position="122"/>
        <end position="128"/>
    </location>
    <ligand>
        <name>ATP</name>
        <dbReference type="ChEBI" id="CHEBI:30616"/>
    </ligand>
</feature>
<accession>Q5P6Z4</accession>
<keyword id="KW-0067">ATP-binding</keyword>
<keyword id="KW-0131">Cell cycle</keyword>
<keyword id="KW-0132">Cell division</keyword>
<keyword id="KW-0133">Cell shape</keyword>
<keyword id="KW-0961">Cell wall biogenesis/degradation</keyword>
<keyword id="KW-0963">Cytoplasm</keyword>
<keyword id="KW-0436">Ligase</keyword>
<keyword id="KW-0547">Nucleotide-binding</keyword>
<keyword id="KW-0573">Peptidoglycan synthesis</keyword>
<keyword id="KW-1185">Reference proteome</keyword>
<organism>
    <name type="scientific">Aromatoleum aromaticum (strain DSM 19018 / LMG 30748 / EbN1)</name>
    <name type="common">Azoarcus sp. (strain EbN1)</name>
    <dbReference type="NCBI Taxonomy" id="76114"/>
    <lineage>
        <taxon>Bacteria</taxon>
        <taxon>Pseudomonadati</taxon>
        <taxon>Pseudomonadota</taxon>
        <taxon>Betaproteobacteria</taxon>
        <taxon>Rhodocyclales</taxon>
        <taxon>Rhodocyclaceae</taxon>
        <taxon>Aromatoleum</taxon>
    </lineage>
</organism>
<proteinExistence type="inferred from homology"/>
<dbReference type="EC" id="6.3.2.9" evidence="1"/>
<dbReference type="EMBL" id="CR555306">
    <property type="protein sequence ID" value="CAI06917.1"/>
    <property type="molecule type" value="Genomic_DNA"/>
</dbReference>
<dbReference type="RefSeq" id="WP_011236645.1">
    <property type="nucleotide sequence ID" value="NC_006513.1"/>
</dbReference>
<dbReference type="SMR" id="Q5P6Z4"/>
<dbReference type="STRING" id="76114.ebA1447"/>
<dbReference type="KEGG" id="eba:ebA1447"/>
<dbReference type="eggNOG" id="COG0771">
    <property type="taxonomic scope" value="Bacteria"/>
</dbReference>
<dbReference type="HOGENOM" id="CLU_032540_1_0_4"/>
<dbReference type="OrthoDB" id="9809796at2"/>
<dbReference type="UniPathway" id="UPA00219"/>
<dbReference type="Proteomes" id="UP000006552">
    <property type="component" value="Chromosome"/>
</dbReference>
<dbReference type="GO" id="GO:0005737">
    <property type="term" value="C:cytoplasm"/>
    <property type="evidence" value="ECO:0007669"/>
    <property type="project" value="UniProtKB-SubCell"/>
</dbReference>
<dbReference type="GO" id="GO:0005524">
    <property type="term" value="F:ATP binding"/>
    <property type="evidence" value="ECO:0007669"/>
    <property type="project" value="UniProtKB-UniRule"/>
</dbReference>
<dbReference type="GO" id="GO:0008764">
    <property type="term" value="F:UDP-N-acetylmuramoylalanine-D-glutamate ligase activity"/>
    <property type="evidence" value="ECO:0007669"/>
    <property type="project" value="UniProtKB-UniRule"/>
</dbReference>
<dbReference type="GO" id="GO:0051301">
    <property type="term" value="P:cell division"/>
    <property type="evidence" value="ECO:0007669"/>
    <property type="project" value="UniProtKB-KW"/>
</dbReference>
<dbReference type="GO" id="GO:0071555">
    <property type="term" value="P:cell wall organization"/>
    <property type="evidence" value="ECO:0007669"/>
    <property type="project" value="UniProtKB-KW"/>
</dbReference>
<dbReference type="GO" id="GO:0009252">
    <property type="term" value="P:peptidoglycan biosynthetic process"/>
    <property type="evidence" value="ECO:0007669"/>
    <property type="project" value="UniProtKB-UniRule"/>
</dbReference>
<dbReference type="GO" id="GO:0008360">
    <property type="term" value="P:regulation of cell shape"/>
    <property type="evidence" value="ECO:0007669"/>
    <property type="project" value="UniProtKB-KW"/>
</dbReference>
<dbReference type="Gene3D" id="3.90.190.20">
    <property type="entry name" value="Mur ligase, C-terminal domain"/>
    <property type="match status" value="1"/>
</dbReference>
<dbReference type="Gene3D" id="3.40.1190.10">
    <property type="entry name" value="Mur-like, catalytic domain"/>
    <property type="match status" value="1"/>
</dbReference>
<dbReference type="Gene3D" id="3.40.50.720">
    <property type="entry name" value="NAD(P)-binding Rossmann-like Domain"/>
    <property type="match status" value="1"/>
</dbReference>
<dbReference type="HAMAP" id="MF_00639">
    <property type="entry name" value="MurD"/>
    <property type="match status" value="1"/>
</dbReference>
<dbReference type="InterPro" id="IPR036565">
    <property type="entry name" value="Mur-like_cat_sf"/>
</dbReference>
<dbReference type="InterPro" id="IPR004101">
    <property type="entry name" value="Mur_ligase_C"/>
</dbReference>
<dbReference type="InterPro" id="IPR036615">
    <property type="entry name" value="Mur_ligase_C_dom_sf"/>
</dbReference>
<dbReference type="InterPro" id="IPR013221">
    <property type="entry name" value="Mur_ligase_cen"/>
</dbReference>
<dbReference type="InterPro" id="IPR005762">
    <property type="entry name" value="MurD"/>
</dbReference>
<dbReference type="NCBIfam" id="TIGR01087">
    <property type="entry name" value="murD"/>
    <property type="match status" value="1"/>
</dbReference>
<dbReference type="PANTHER" id="PTHR43692">
    <property type="entry name" value="UDP-N-ACETYLMURAMOYLALANINE--D-GLUTAMATE LIGASE"/>
    <property type="match status" value="1"/>
</dbReference>
<dbReference type="PANTHER" id="PTHR43692:SF1">
    <property type="entry name" value="UDP-N-ACETYLMURAMOYLALANINE--D-GLUTAMATE LIGASE"/>
    <property type="match status" value="1"/>
</dbReference>
<dbReference type="Pfam" id="PF02875">
    <property type="entry name" value="Mur_ligase_C"/>
    <property type="match status" value="1"/>
</dbReference>
<dbReference type="Pfam" id="PF08245">
    <property type="entry name" value="Mur_ligase_M"/>
    <property type="match status" value="1"/>
</dbReference>
<dbReference type="Pfam" id="PF21799">
    <property type="entry name" value="MurD-like_N"/>
    <property type="match status" value="1"/>
</dbReference>
<dbReference type="SUPFAM" id="SSF51984">
    <property type="entry name" value="MurCD N-terminal domain"/>
    <property type="match status" value="1"/>
</dbReference>
<dbReference type="SUPFAM" id="SSF53623">
    <property type="entry name" value="MurD-like peptide ligases, catalytic domain"/>
    <property type="match status" value="1"/>
</dbReference>
<dbReference type="SUPFAM" id="SSF53244">
    <property type="entry name" value="MurD-like peptide ligases, peptide-binding domain"/>
    <property type="match status" value="1"/>
</dbReference>
<evidence type="ECO:0000255" key="1">
    <source>
        <dbReference type="HAMAP-Rule" id="MF_00639"/>
    </source>
</evidence>
<comment type="function">
    <text evidence="1">Cell wall formation. Catalyzes the addition of glutamate to the nucleotide precursor UDP-N-acetylmuramoyl-L-alanine (UMA).</text>
</comment>
<comment type="catalytic activity">
    <reaction evidence="1">
        <text>UDP-N-acetyl-alpha-D-muramoyl-L-alanine + D-glutamate + ATP = UDP-N-acetyl-alpha-D-muramoyl-L-alanyl-D-glutamate + ADP + phosphate + H(+)</text>
        <dbReference type="Rhea" id="RHEA:16429"/>
        <dbReference type="ChEBI" id="CHEBI:15378"/>
        <dbReference type="ChEBI" id="CHEBI:29986"/>
        <dbReference type="ChEBI" id="CHEBI:30616"/>
        <dbReference type="ChEBI" id="CHEBI:43474"/>
        <dbReference type="ChEBI" id="CHEBI:83898"/>
        <dbReference type="ChEBI" id="CHEBI:83900"/>
        <dbReference type="ChEBI" id="CHEBI:456216"/>
        <dbReference type="EC" id="6.3.2.9"/>
    </reaction>
</comment>
<comment type="pathway">
    <text evidence="1">Cell wall biogenesis; peptidoglycan biosynthesis.</text>
</comment>
<comment type="subcellular location">
    <subcellularLocation>
        <location evidence="1">Cytoplasm</location>
    </subcellularLocation>
</comment>
<comment type="similarity">
    <text evidence="1">Belongs to the MurCDEF family.</text>
</comment>
<gene>
    <name evidence="1" type="primary">murD</name>
    <name type="ordered locus">AZOSEA07940</name>
    <name type="ORF">ebA1447</name>
</gene>
<sequence length="466" mass="48375">MSALTGKHVLVLGLGESGLAMARWCALRGARLRVADSRQTPPGLDTLRADAPLAEIVVGNFGAEVLSGIDLVALSPGVDPRIGIAAEARHRGLPLTGEMSLLAQALDELGVRAQTRILAITGTNGKTTTTALTAALAQAAGLDAVAAGNISPAALDVLMDRLAQGAPLPECWVLELSSFQIETMHALDPEAATVLNVTDDHLDRYAGLDEYAATKAAIFEGRGVQVLNRDDARVAAMALPGRSLIRFGASAPAATDDYGLVEVAGAAWLVRGRERLLALADLPLAGRHNAANTLAALALCEGGLGIAPQRLTGAVVAFRGLPHRVELVAERSDGVRFYDDSKGTNVGATVAALDGMDCPVVLIAGGDGKGQDFSPLREAVVRRARAVVLIGRDAPRIESALQGSAVALEHAPDLDAAVVRASEQAQPGDAVLLSPACASLDMFRNYAHRAEVFIAAARRLPEVRAS</sequence>
<protein>
    <recommendedName>
        <fullName evidence="1">UDP-N-acetylmuramoylalanine--D-glutamate ligase</fullName>
        <ecNumber evidence="1">6.3.2.9</ecNumber>
    </recommendedName>
    <alternativeName>
        <fullName evidence="1">D-glutamic acid-adding enzyme</fullName>
    </alternativeName>
    <alternativeName>
        <fullName evidence="1">UDP-N-acetylmuramoyl-L-alanyl-D-glutamate synthetase</fullName>
    </alternativeName>
</protein>
<name>MURD_AROAE</name>
<reference key="1">
    <citation type="journal article" date="2005" name="Arch. Microbiol.">
        <title>The genome sequence of an anaerobic aromatic-degrading denitrifying bacterium, strain EbN1.</title>
        <authorList>
            <person name="Rabus R."/>
            <person name="Kube M."/>
            <person name="Heider J."/>
            <person name="Beck A."/>
            <person name="Heitmann K."/>
            <person name="Widdel F."/>
            <person name="Reinhardt R."/>
        </authorList>
    </citation>
    <scope>NUCLEOTIDE SEQUENCE [LARGE SCALE GENOMIC DNA]</scope>
    <source>
        <strain>DSM 19018 / LMG 30748 / EbN1</strain>
    </source>
</reference>